<organism>
    <name type="scientific">Mus musculus</name>
    <name type="common">Mouse</name>
    <dbReference type="NCBI Taxonomy" id="10090"/>
    <lineage>
        <taxon>Eukaryota</taxon>
        <taxon>Metazoa</taxon>
        <taxon>Chordata</taxon>
        <taxon>Craniata</taxon>
        <taxon>Vertebrata</taxon>
        <taxon>Euteleostomi</taxon>
        <taxon>Mammalia</taxon>
        <taxon>Eutheria</taxon>
        <taxon>Euarchontoglires</taxon>
        <taxon>Glires</taxon>
        <taxon>Rodentia</taxon>
        <taxon>Myomorpha</taxon>
        <taxon>Muroidea</taxon>
        <taxon>Muridae</taxon>
        <taxon>Murinae</taxon>
        <taxon>Mus</taxon>
        <taxon>Mus</taxon>
    </lineage>
</organism>
<dbReference type="EC" id="2.3.2.-" evidence="1"/>
<dbReference type="EMBL" id="AB079386">
    <property type="protein sequence ID" value="BAC57452.1"/>
    <property type="molecule type" value="mRNA"/>
</dbReference>
<dbReference type="EMBL" id="AK005266">
    <property type="protein sequence ID" value="BAB23918.1"/>
    <property type="molecule type" value="mRNA"/>
</dbReference>
<dbReference type="EMBL" id="AK011409">
    <property type="protein sequence ID" value="BAB27600.1"/>
    <property type="molecule type" value="mRNA"/>
</dbReference>
<dbReference type="EMBL" id="AK078877">
    <property type="protein sequence ID" value="BAC37437.1"/>
    <property type="molecule type" value="mRNA"/>
</dbReference>
<dbReference type="EMBL" id="AK150914">
    <property type="protein sequence ID" value="BAE29952.1"/>
    <property type="molecule type" value="mRNA"/>
</dbReference>
<dbReference type="EMBL" id="AK159231">
    <property type="protein sequence ID" value="BAE34917.1"/>
    <property type="molecule type" value="mRNA"/>
</dbReference>
<dbReference type="EMBL" id="BC010809">
    <property type="protein sequence ID" value="AAH10809.1"/>
    <property type="molecule type" value="mRNA"/>
</dbReference>
<dbReference type="CCDS" id="CCDS28194.1"/>
<dbReference type="RefSeq" id="NP_080678.1">
    <property type="nucleotide sequence ID" value="NM_026402.3"/>
</dbReference>
<dbReference type="SMR" id="Q9CPX6"/>
<dbReference type="BioGRID" id="212471">
    <property type="interactions" value="20"/>
</dbReference>
<dbReference type="DIP" id="DIP-60109N"/>
<dbReference type="FunCoup" id="Q9CPX6">
    <property type="interactions" value="3989"/>
</dbReference>
<dbReference type="IntAct" id="Q9CPX6">
    <property type="interactions" value="4"/>
</dbReference>
<dbReference type="MINT" id="Q9CPX6"/>
<dbReference type="STRING" id="10090.ENSMUSP00000023343"/>
<dbReference type="iPTMnet" id="Q9CPX6"/>
<dbReference type="PhosphoSitePlus" id="Q9CPX6"/>
<dbReference type="SwissPalm" id="Q9CPX6"/>
<dbReference type="jPOST" id="Q9CPX6"/>
<dbReference type="PaxDb" id="10090-ENSMUSP00000023343"/>
<dbReference type="PeptideAtlas" id="Q9CPX6"/>
<dbReference type="ProteomicsDB" id="265163"/>
<dbReference type="Pumba" id="Q9CPX6"/>
<dbReference type="Antibodypedia" id="32502">
    <property type="antibodies" value="736 antibodies from 39 providers"/>
</dbReference>
<dbReference type="Ensembl" id="ENSMUST00000023343.4">
    <property type="protein sequence ID" value="ENSMUSP00000023343.4"/>
    <property type="gene ID" value="ENSMUSG00000022663.4"/>
</dbReference>
<dbReference type="GeneID" id="67841"/>
<dbReference type="KEGG" id="mmu:67841"/>
<dbReference type="UCSC" id="uc007zii.1">
    <property type="organism name" value="mouse"/>
</dbReference>
<dbReference type="AGR" id="MGI:1915091"/>
<dbReference type="CTD" id="64422"/>
<dbReference type="MGI" id="MGI:1915091">
    <property type="gene designation" value="Atg3"/>
</dbReference>
<dbReference type="VEuPathDB" id="HostDB:ENSMUSG00000022663"/>
<dbReference type="eggNOG" id="KOG2981">
    <property type="taxonomic scope" value="Eukaryota"/>
</dbReference>
<dbReference type="GeneTree" id="ENSGT00390000010308"/>
<dbReference type="HOGENOM" id="CLU_027518_0_0_1"/>
<dbReference type="InParanoid" id="Q9CPX6"/>
<dbReference type="OMA" id="HCPTWSW"/>
<dbReference type="OrthoDB" id="1584384at2759"/>
<dbReference type="PhylomeDB" id="Q9CPX6"/>
<dbReference type="TreeFam" id="TF105903"/>
<dbReference type="Reactome" id="R-MMU-1632852">
    <property type="pathway name" value="Macroautophagy"/>
</dbReference>
<dbReference type="BioGRID-ORCS" id="67841">
    <property type="hits" value="24 hits in 80 CRISPR screens"/>
</dbReference>
<dbReference type="ChiTaRS" id="Atg3">
    <property type="organism name" value="mouse"/>
</dbReference>
<dbReference type="PRO" id="PR:Q9CPX6"/>
<dbReference type="Proteomes" id="UP000000589">
    <property type="component" value="Chromosome 16"/>
</dbReference>
<dbReference type="RNAct" id="Q9CPX6">
    <property type="molecule type" value="protein"/>
</dbReference>
<dbReference type="Bgee" id="ENSMUSG00000022663">
    <property type="expression patterns" value="Expressed in parotid gland and 245 other cell types or tissues"/>
</dbReference>
<dbReference type="GO" id="GO:0034274">
    <property type="term" value="C:Atg12-Atg5-Atg16 complex"/>
    <property type="evidence" value="ECO:0007669"/>
    <property type="project" value="Ensembl"/>
</dbReference>
<dbReference type="GO" id="GO:0000153">
    <property type="term" value="C:cytoplasmic ubiquitin ligase complex"/>
    <property type="evidence" value="ECO:0000266"/>
    <property type="project" value="MGI"/>
</dbReference>
<dbReference type="GO" id="GO:0005829">
    <property type="term" value="C:cytosol"/>
    <property type="evidence" value="ECO:0007669"/>
    <property type="project" value="Ensembl"/>
</dbReference>
<dbReference type="GO" id="GO:0019777">
    <property type="term" value="F:Atg12 transferase activity"/>
    <property type="evidence" value="ECO:0000314"/>
    <property type="project" value="UniProtKB"/>
</dbReference>
<dbReference type="GO" id="GO:0141046">
    <property type="term" value="F:Atg8-family conjugating enzyme activity"/>
    <property type="evidence" value="ECO:0000250"/>
    <property type="project" value="UniProtKB"/>
</dbReference>
<dbReference type="GO" id="GO:0019776">
    <property type="term" value="F:Atg8-family ligase activity"/>
    <property type="evidence" value="ECO:0000315"/>
    <property type="project" value="UniProtKB"/>
</dbReference>
<dbReference type="GO" id="GO:0019899">
    <property type="term" value="F:enzyme binding"/>
    <property type="evidence" value="ECO:0007669"/>
    <property type="project" value="Ensembl"/>
</dbReference>
<dbReference type="GO" id="GO:0019787">
    <property type="term" value="F:ubiquitin-like protein transferase activity"/>
    <property type="evidence" value="ECO:0000266"/>
    <property type="project" value="MGI"/>
</dbReference>
<dbReference type="GO" id="GO:0000045">
    <property type="term" value="P:autophagosome assembly"/>
    <property type="evidence" value="ECO:0000314"/>
    <property type="project" value="UniProtKB"/>
</dbReference>
<dbReference type="GO" id="GO:0006914">
    <property type="term" value="P:autophagy"/>
    <property type="evidence" value="ECO:0000315"/>
    <property type="project" value="UniProtKB"/>
</dbReference>
<dbReference type="GO" id="GO:0016236">
    <property type="term" value="P:macroautophagy"/>
    <property type="evidence" value="ECO:0000315"/>
    <property type="project" value="MGI"/>
</dbReference>
<dbReference type="GO" id="GO:0043653">
    <property type="term" value="P:mitochondrial fragmentation involved in apoptotic process"/>
    <property type="evidence" value="ECO:0000315"/>
    <property type="project" value="UniProtKB"/>
</dbReference>
<dbReference type="GO" id="GO:0050765">
    <property type="term" value="P:negative regulation of phagocytosis"/>
    <property type="evidence" value="ECO:0000315"/>
    <property type="project" value="MGI"/>
</dbReference>
<dbReference type="GO" id="GO:0036211">
    <property type="term" value="P:protein modification process"/>
    <property type="evidence" value="ECO:0000266"/>
    <property type="project" value="MGI"/>
</dbReference>
<dbReference type="GO" id="GO:0015031">
    <property type="term" value="P:protein transport"/>
    <property type="evidence" value="ECO:0007669"/>
    <property type="project" value="UniProtKB-KW"/>
</dbReference>
<dbReference type="GO" id="GO:0016567">
    <property type="term" value="P:protein ubiquitination"/>
    <property type="evidence" value="ECO:0007669"/>
    <property type="project" value="Ensembl"/>
</dbReference>
<dbReference type="GO" id="GO:1902017">
    <property type="term" value="P:regulation of cilium assembly"/>
    <property type="evidence" value="ECO:0000315"/>
    <property type="project" value="UniProtKB"/>
</dbReference>
<dbReference type="FunFam" id="3.30.1460.50:FF:000001">
    <property type="entry name" value="Autophagy-related protein 3"/>
    <property type="match status" value="1"/>
</dbReference>
<dbReference type="Gene3D" id="3.30.1460.50">
    <property type="match status" value="1"/>
</dbReference>
<dbReference type="InterPro" id="IPR007135">
    <property type="entry name" value="Atg3/Atg10"/>
</dbReference>
<dbReference type="PANTHER" id="PTHR12866">
    <property type="entry name" value="UBIQUITIN-LIKE-CONJUGATING ENZYME ATG3"/>
    <property type="match status" value="1"/>
</dbReference>
<dbReference type="PANTHER" id="PTHR12866:SF2">
    <property type="entry name" value="UBIQUITIN-LIKE-CONJUGATING ENZYME ATG3"/>
    <property type="match status" value="1"/>
</dbReference>
<dbReference type="Pfam" id="PF03987">
    <property type="entry name" value="Autophagy_act_C"/>
    <property type="match status" value="1"/>
</dbReference>
<sequence length="314" mass="35796">MQNVINTVKGKALEVAEYLTPVLKESKFKETGVITPEEFVAAGDHLVHHCPTWQWATGEELKVKAYLPTDKQFLVTKNVPCYKRCKQMEYSDELEAIIEEDDGDGGWVDTYHNTGITGITEAVKEITLESKDSIKLQDCSALCDEEDEEDEGEAADMEEYEESGLLETDEATLDTRKIVEACKAKADAGGEDAILQTRTYDLYITYDKYYQTPRLWLFGYDEQRQPLTVEHMYEDISQDHVKKTVTIENHPHLPPPPMCSVHPCRHAEVMKKIIETVAEGGGELGVHMYLLIFLKFVQAVIPTIEYDYTRHFTM</sequence>
<keyword id="KW-0007">Acetylation</keyword>
<keyword id="KW-0072">Autophagy</keyword>
<keyword id="KW-0963">Cytoplasm</keyword>
<keyword id="KW-1017">Isopeptide bond</keyword>
<keyword id="KW-0653">Protein transport</keyword>
<keyword id="KW-1185">Reference proteome</keyword>
<keyword id="KW-0808">Transferase</keyword>
<keyword id="KW-0813">Transport</keyword>
<keyword id="KW-0832">Ubl conjugation</keyword>
<keyword id="KW-0833">Ubl conjugation pathway</keyword>
<reference key="1">
    <citation type="submission" date="2002-02" db="EMBL/GenBank/DDBJ databases">
        <title>Murine Apg3p is an authentic E2 enzyme for Apg8p homologs.</title>
        <authorList>
            <person name="Tanida I."/>
            <person name="Nishitani T."/>
            <person name="Tanida-Miyake E."/>
            <person name="Ueno T."/>
            <person name="Kominami E."/>
        </authorList>
    </citation>
    <scope>NUCLEOTIDE SEQUENCE [MRNA]</scope>
</reference>
<reference key="2">
    <citation type="journal article" date="2005" name="Science">
        <title>The transcriptional landscape of the mammalian genome.</title>
        <authorList>
            <person name="Carninci P."/>
            <person name="Kasukawa T."/>
            <person name="Katayama S."/>
            <person name="Gough J."/>
            <person name="Frith M.C."/>
            <person name="Maeda N."/>
            <person name="Oyama R."/>
            <person name="Ravasi T."/>
            <person name="Lenhard B."/>
            <person name="Wells C."/>
            <person name="Kodzius R."/>
            <person name="Shimokawa K."/>
            <person name="Bajic V.B."/>
            <person name="Brenner S.E."/>
            <person name="Batalov S."/>
            <person name="Forrest A.R."/>
            <person name="Zavolan M."/>
            <person name="Davis M.J."/>
            <person name="Wilming L.G."/>
            <person name="Aidinis V."/>
            <person name="Allen J.E."/>
            <person name="Ambesi-Impiombato A."/>
            <person name="Apweiler R."/>
            <person name="Aturaliya R.N."/>
            <person name="Bailey T.L."/>
            <person name="Bansal M."/>
            <person name="Baxter L."/>
            <person name="Beisel K.W."/>
            <person name="Bersano T."/>
            <person name="Bono H."/>
            <person name="Chalk A.M."/>
            <person name="Chiu K.P."/>
            <person name="Choudhary V."/>
            <person name="Christoffels A."/>
            <person name="Clutterbuck D.R."/>
            <person name="Crowe M.L."/>
            <person name="Dalla E."/>
            <person name="Dalrymple B.P."/>
            <person name="de Bono B."/>
            <person name="Della Gatta G."/>
            <person name="di Bernardo D."/>
            <person name="Down T."/>
            <person name="Engstrom P."/>
            <person name="Fagiolini M."/>
            <person name="Faulkner G."/>
            <person name="Fletcher C.F."/>
            <person name="Fukushima T."/>
            <person name="Furuno M."/>
            <person name="Futaki S."/>
            <person name="Gariboldi M."/>
            <person name="Georgii-Hemming P."/>
            <person name="Gingeras T.R."/>
            <person name="Gojobori T."/>
            <person name="Green R.E."/>
            <person name="Gustincich S."/>
            <person name="Harbers M."/>
            <person name="Hayashi Y."/>
            <person name="Hensch T.K."/>
            <person name="Hirokawa N."/>
            <person name="Hill D."/>
            <person name="Huminiecki L."/>
            <person name="Iacono M."/>
            <person name="Ikeo K."/>
            <person name="Iwama A."/>
            <person name="Ishikawa T."/>
            <person name="Jakt M."/>
            <person name="Kanapin A."/>
            <person name="Katoh M."/>
            <person name="Kawasawa Y."/>
            <person name="Kelso J."/>
            <person name="Kitamura H."/>
            <person name="Kitano H."/>
            <person name="Kollias G."/>
            <person name="Krishnan S.P."/>
            <person name="Kruger A."/>
            <person name="Kummerfeld S.K."/>
            <person name="Kurochkin I.V."/>
            <person name="Lareau L.F."/>
            <person name="Lazarevic D."/>
            <person name="Lipovich L."/>
            <person name="Liu J."/>
            <person name="Liuni S."/>
            <person name="McWilliam S."/>
            <person name="Madan Babu M."/>
            <person name="Madera M."/>
            <person name="Marchionni L."/>
            <person name="Matsuda H."/>
            <person name="Matsuzawa S."/>
            <person name="Miki H."/>
            <person name="Mignone F."/>
            <person name="Miyake S."/>
            <person name="Morris K."/>
            <person name="Mottagui-Tabar S."/>
            <person name="Mulder N."/>
            <person name="Nakano N."/>
            <person name="Nakauchi H."/>
            <person name="Ng P."/>
            <person name="Nilsson R."/>
            <person name="Nishiguchi S."/>
            <person name="Nishikawa S."/>
            <person name="Nori F."/>
            <person name="Ohara O."/>
            <person name="Okazaki Y."/>
            <person name="Orlando V."/>
            <person name="Pang K.C."/>
            <person name="Pavan W.J."/>
            <person name="Pavesi G."/>
            <person name="Pesole G."/>
            <person name="Petrovsky N."/>
            <person name="Piazza S."/>
            <person name="Reed J."/>
            <person name="Reid J.F."/>
            <person name="Ring B.Z."/>
            <person name="Ringwald M."/>
            <person name="Rost B."/>
            <person name="Ruan Y."/>
            <person name="Salzberg S.L."/>
            <person name="Sandelin A."/>
            <person name="Schneider C."/>
            <person name="Schoenbach C."/>
            <person name="Sekiguchi K."/>
            <person name="Semple C.A."/>
            <person name="Seno S."/>
            <person name="Sessa L."/>
            <person name="Sheng Y."/>
            <person name="Shibata Y."/>
            <person name="Shimada H."/>
            <person name="Shimada K."/>
            <person name="Silva D."/>
            <person name="Sinclair B."/>
            <person name="Sperling S."/>
            <person name="Stupka E."/>
            <person name="Sugiura K."/>
            <person name="Sultana R."/>
            <person name="Takenaka Y."/>
            <person name="Taki K."/>
            <person name="Tammoja K."/>
            <person name="Tan S.L."/>
            <person name="Tang S."/>
            <person name="Taylor M.S."/>
            <person name="Tegner J."/>
            <person name="Teichmann S.A."/>
            <person name="Ueda H.R."/>
            <person name="van Nimwegen E."/>
            <person name="Verardo R."/>
            <person name="Wei C.L."/>
            <person name="Yagi K."/>
            <person name="Yamanishi H."/>
            <person name="Zabarovsky E."/>
            <person name="Zhu S."/>
            <person name="Zimmer A."/>
            <person name="Hide W."/>
            <person name="Bult C."/>
            <person name="Grimmond S.M."/>
            <person name="Teasdale R.D."/>
            <person name="Liu E.T."/>
            <person name="Brusic V."/>
            <person name="Quackenbush J."/>
            <person name="Wahlestedt C."/>
            <person name="Mattick J.S."/>
            <person name="Hume D.A."/>
            <person name="Kai C."/>
            <person name="Sasaki D."/>
            <person name="Tomaru Y."/>
            <person name="Fukuda S."/>
            <person name="Kanamori-Katayama M."/>
            <person name="Suzuki M."/>
            <person name="Aoki J."/>
            <person name="Arakawa T."/>
            <person name="Iida J."/>
            <person name="Imamura K."/>
            <person name="Itoh M."/>
            <person name="Kato T."/>
            <person name="Kawaji H."/>
            <person name="Kawagashira N."/>
            <person name="Kawashima T."/>
            <person name="Kojima M."/>
            <person name="Kondo S."/>
            <person name="Konno H."/>
            <person name="Nakano K."/>
            <person name="Ninomiya N."/>
            <person name="Nishio T."/>
            <person name="Okada M."/>
            <person name="Plessy C."/>
            <person name="Shibata K."/>
            <person name="Shiraki T."/>
            <person name="Suzuki S."/>
            <person name="Tagami M."/>
            <person name="Waki K."/>
            <person name="Watahiki A."/>
            <person name="Okamura-Oho Y."/>
            <person name="Suzuki H."/>
            <person name="Kawai J."/>
            <person name="Hayashizaki Y."/>
        </authorList>
    </citation>
    <scope>NUCLEOTIDE SEQUENCE [LARGE SCALE MRNA]</scope>
    <source>
        <strain>C57BL/6J</strain>
        <tissue>Bone marrow</tissue>
        <tissue>Cerebellum</tissue>
        <tissue>Colon</tissue>
    </source>
</reference>
<reference key="3">
    <citation type="journal article" date="2004" name="Genome Res.">
        <title>The status, quality, and expansion of the NIH full-length cDNA project: the Mammalian Gene Collection (MGC).</title>
        <authorList>
            <consortium name="The MGC Project Team"/>
        </authorList>
    </citation>
    <scope>NUCLEOTIDE SEQUENCE [LARGE SCALE MRNA]</scope>
    <source>
        <strain>FVB/N</strain>
        <tissue>Kidney</tissue>
    </source>
</reference>
<reference key="4">
    <citation type="journal article" date="2008" name="Mol. Biol. Cell">
        <title>The Atg16L complex specifies the site of LC3 lipidation for membrane biogenesis in autophagy.</title>
        <authorList>
            <person name="Fujita N."/>
            <person name="Itoh T."/>
            <person name="Omori H."/>
            <person name="Fukuda M."/>
            <person name="Noda T."/>
            <person name="Yoshimori T."/>
        </authorList>
    </citation>
    <scope>INTERACTION WITH ATG12</scope>
</reference>
<reference key="5">
    <citation type="journal article" date="2008" name="Mol. Biol. Cell">
        <title>The Atg8 conjugation system is indispensable for proper development of autophagic isolation membranes in mice.</title>
        <authorList>
            <person name="Sou Y.S."/>
            <person name="Waguri S."/>
            <person name="Iwata J."/>
            <person name="Ueno T."/>
            <person name="Fujimura T."/>
            <person name="Hara T."/>
            <person name="Sawada N."/>
            <person name="Yamada A."/>
            <person name="Mizushima N."/>
            <person name="Uchiyama Y."/>
            <person name="Kominami E."/>
            <person name="Tanaka K."/>
            <person name="Komatsu M."/>
        </authorList>
    </citation>
    <scope>DISRUPTION PHENOTYPE</scope>
    <scope>FUNCTION</scope>
</reference>
<reference key="6">
    <citation type="journal article" date="2010" name="Cell">
        <title>ATG12 conjugation to ATG3 regulates mitochondrial homeostasis and cell death.</title>
        <authorList>
            <person name="Radoshevich L."/>
            <person name="Murrow L."/>
            <person name="Chen N."/>
            <person name="Fernandez E."/>
            <person name="Roy S."/>
            <person name="Fung C."/>
            <person name="Debnath J."/>
        </authorList>
    </citation>
    <scope>FUNCTION</scope>
    <scope>CONJUGATION TO ATG12 AT LYS-243</scope>
    <scope>MUTAGENESIS OF LYS-71; LYS-83; LYS-243; CYS-264; LYS-271 AND LYS-295</scope>
</reference>
<reference key="7">
    <citation type="journal article" date="2010" name="Cell">
        <title>A tissue-specific atlas of mouse protein phosphorylation and expression.</title>
        <authorList>
            <person name="Huttlin E.L."/>
            <person name="Jedrychowski M.P."/>
            <person name="Elias J.E."/>
            <person name="Goswami T."/>
            <person name="Rad R."/>
            <person name="Beausoleil S.A."/>
            <person name="Villen J."/>
            <person name="Haas W."/>
            <person name="Sowa M.E."/>
            <person name="Gygi S.P."/>
        </authorList>
    </citation>
    <scope>IDENTIFICATION BY MASS SPECTROMETRY [LARGE SCALE ANALYSIS]</scope>
    <source>
        <tissue>Brain</tissue>
        <tissue>Brown adipose tissue</tissue>
        <tissue>Kidney</tissue>
        <tissue>Liver</tissue>
        <tissue>Lung</tissue>
        <tissue>Pancreas</tissue>
        <tissue>Spleen</tissue>
        <tissue>Testis</tissue>
    </source>
</reference>
<reference key="8">
    <citation type="journal article" date="2011" name="Autophagy">
        <title>Vaccinia virus leads to ATG12-ATG3 conjugation and deficiency in autophagosome formation.</title>
        <authorList>
            <person name="Moloughney J.G."/>
            <person name="Monken C.E."/>
            <person name="Tao H."/>
            <person name="Zhang H."/>
            <person name="Thomas J.D."/>
            <person name="Lattime E.C."/>
            <person name="Jin S."/>
        </authorList>
    </citation>
    <scope>CONJUGATION TO ATG12</scope>
</reference>
<reference key="9">
    <citation type="journal article" date="2013" name="Nature">
        <title>Autophagy promotes primary ciliogenesis by removing OFD1 from centriolar satellites.</title>
        <authorList>
            <person name="Tang Z."/>
            <person name="Lin M.G."/>
            <person name="Stowe T.R."/>
            <person name="Chen S."/>
            <person name="Zhu M."/>
            <person name="Stearns T."/>
            <person name="Franco B."/>
            <person name="Zhong Q."/>
        </authorList>
    </citation>
    <scope>FUNCTION</scope>
</reference>
<reference key="10">
    <citation type="journal article" date="2014" name="Nat. Cell Biol.">
        <title>Lipidation of the LC3/GABARAP family of autophagy proteins relies on a membrane-curvature-sensing domain in Atg3.</title>
        <authorList>
            <person name="Nath S."/>
            <person name="Dancourt J."/>
            <person name="Shteyn V."/>
            <person name="Puente G."/>
            <person name="Fong W.M."/>
            <person name="Nag S."/>
            <person name="Bewersdorf J."/>
            <person name="Yamamoto A."/>
            <person name="Antonny B."/>
            <person name="Melia T.J."/>
        </authorList>
    </citation>
    <scope>FUNCTION</scope>
    <scope>MUTAGENESIS OF VAL-4; ILE-5; VAL-8; LYS-9; LYS-11; VAL-15 AND LEU-19</scope>
    <scope>MOTIF</scope>
</reference>
<reference key="11">
    <citation type="journal article" date="2015" name="Nat. Cell Biol.">
        <title>ATG12-ATG3 interacts with Alix to promote basal autophagic flux and late endosome function.</title>
        <authorList>
            <person name="Murrow L."/>
            <person name="Malhotra R."/>
            <person name="Debnath J."/>
        </authorList>
    </citation>
    <scope>FUNCTION</scope>
    <scope>INTERACTION WITH PDCD6IP</scope>
    <scope>MUTAGENESIS OF LYS-243</scope>
</reference>
<reference key="12">
    <citation type="journal article" date="2018" name="EMBO Rep.">
        <title>eIF5A is required for autophagy by mediating ATG3 translation.</title>
        <authorList>
            <person name="Lubas M."/>
            <person name="Harder L.M."/>
            <person name="Kumsta C."/>
            <person name="Tiessen I."/>
            <person name="Hansen M."/>
            <person name="Andersen J.S."/>
            <person name="Lund A.H."/>
            <person name="Frankel L.B."/>
        </authorList>
    </citation>
    <scope>INDUCTION BY EIF5A1</scope>
    <scope>MOTIF</scope>
</reference>
<protein>
    <recommendedName>
        <fullName evidence="11">Ubiquitin-like-conjugating enzyme ATG3</fullName>
        <ecNumber evidence="1">2.3.2.-</ecNumber>
    </recommendedName>
    <alternativeName>
        <fullName>Autophagy-related protein 3</fullName>
        <shortName>APG3-like</shortName>
    </alternativeName>
</protein>
<accession>Q9CPX6</accession>
<accession>Q3TXJ9</accession>
<feature type="chain" id="PRO_0000213570" description="Ubiquitin-like-conjugating enzyme ATG3">
    <location>
        <begin position="1"/>
        <end position="314"/>
    </location>
</feature>
<feature type="region of interest" description="Interaction with ATG12" evidence="1">
    <location>
        <begin position="140"/>
        <end position="170"/>
    </location>
</feature>
<feature type="region of interest" description="Disordered" evidence="2">
    <location>
        <begin position="143"/>
        <end position="165"/>
    </location>
</feature>
<feature type="short sequence motif" description="Membrane-curvature-sensing motif" evidence="8">
    <location>
        <begin position="4"/>
        <end position="19"/>
    </location>
</feature>
<feature type="short sequence motif" description="Increases ATG3 translation efficiency by the ribomome assisted of EIF5A" evidence="10">
    <location>
        <begin position="101"/>
        <end position="103"/>
    </location>
</feature>
<feature type="short sequence motif" description="LIR motif" evidence="1">
    <location>
        <begin position="104"/>
        <end position="110"/>
    </location>
</feature>
<feature type="short sequence motif" description="Caspase cleavage motif LETD" evidence="1">
    <location>
        <begin position="166"/>
        <end position="169"/>
    </location>
</feature>
<feature type="active site" description="Glycyl thioester intermediate" evidence="1">
    <location>
        <position position="264"/>
    </location>
</feature>
<feature type="site" description="Cleavage; by CASP8" evidence="1">
    <location>
        <begin position="169"/>
        <end position="170"/>
    </location>
</feature>
<feature type="modified residue" description="N-acetylmethionine" evidence="1">
    <location>
        <position position="1"/>
    </location>
</feature>
<feature type="cross-link" description="Glycyl lysine isopeptide (Lys-Gly) (interchain with G-Cter in ATG12)" evidence="5">
    <location>
        <position position="243"/>
    </location>
</feature>
<feature type="mutagenesis site" description="Reduces the amount of hydrophobic surface area available to partition into a bilayer. Does not affect the ATG3:GABARAPL1 intermediate. Rescues MAP1LC3B lipidation when transfected in cell lacking ATG3." evidence="8">
    <original>V</original>
    <variation>K</variation>
    <location>
        <position position="4"/>
    </location>
</feature>
<feature type="mutagenesis site" description="Reduces the amount of hydrophobic surface area available to partition into a bilayer. Does not affect the ATG3:GABARAPL1 intermediate." evidence="8">
    <original>I</original>
    <variation>K</variation>
    <location>
        <position position="5"/>
    </location>
</feature>
<feature type="mutagenesis site" description="Destroys the amphipathic character and eliminates lipidation activity. Does not affect the ATG3:GABARAPL1 intermediate." evidence="8">
    <original>V</original>
    <variation>D</variation>
    <location>
        <position position="8"/>
    </location>
</feature>
<feature type="mutagenesis site" description="Eliminates lipidation. Does not affect the ATG3:GABARAPL1 intermediate." evidence="8">
    <original>K</original>
    <variation>D</variation>
    <location>
        <position position="9"/>
    </location>
</feature>
<feature type="mutagenesis site" description="Eliminates lipidation. Does not affect the ATG3:GABARAPL1 intermediate." evidence="8">
    <original>K</original>
    <variation>D</variation>
    <location>
        <position position="11"/>
    </location>
</feature>
<feature type="mutagenesis site" description="Does not affect GABARAPL1 lipdation. Rescues MAP1LC3B lipidation when transfected in cell lacking ATG3." evidence="8">
    <original>K</original>
    <variation>L</variation>
    <location>
        <position position="11"/>
    </location>
</feature>
<feature type="mutagenesis site" description="Rescues MAP1LC3B lipidation when transfected in cell lacking ATG3." evidence="8">
    <original>K</original>
    <variation>R</variation>
    <location>
        <position position="11"/>
    </location>
</feature>
<feature type="mutagenesis site" description="Rescues MAP1LC3B lipidation when transfected in cell lacking ATG3." evidence="8">
    <original>K</original>
    <variation>W</variation>
    <location>
        <position position="11"/>
    </location>
</feature>
<feature type="mutagenesis site" description="Destroys the amphipathic character and eliminates lipidation activity. Does not affect the ATG3:GABARAPL1 intermediate." evidence="8">
    <original>V</original>
    <variation>K</variation>
    <location>
        <position position="15"/>
    </location>
</feature>
<feature type="mutagenesis site" description="Destroys the amphipathic character and eliminates lipidation activity. Does not affect the ATG3:GABARAPL1 intermediate." evidence="8">
    <original>L</original>
    <variation>K</variation>
    <location>
        <position position="19"/>
    </location>
</feature>
<feature type="mutagenesis site" description="Does not affect ATG12 conjugation." evidence="5">
    <original>K</original>
    <variation>R</variation>
    <location>
        <position position="71"/>
    </location>
</feature>
<feature type="mutagenesis site" description="Does not affect ATG12 conjugation." evidence="5">
    <original>K</original>
    <variation>R</variation>
    <location>
        <position position="83"/>
    </location>
</feature>
<feature type="mutagenesis site" description="Abolishes ATG12 conjugation, leading to an expansion in mitochondrial mass and fragmented mitochondrial morphology. Does not affect PE-conjugation to ATG8-like proteins. Reduces autophagosome maturation. Affects multivesicular bodies (MVBs) distribution and morphology. Exhibits defects in late endosome to lysosome trafficking. Does not interacts with PDCD6IP." evidence="5 9">
    <original>K</original>
    <variation>R</variation>
    <location>
        <position position="243"/>
    </location>
</feature>
<feature type="mutagenesis site" description="Abolishes E2-like activity." evidence="5">
    <original>C</original>
    <variation>A</variation>
    <location>
        <position position="264"/>
    </location>
</feature>
<feature type="mutagenesis site" description="Does not affect ATG12 conjugation." evidence="5">
    <original>K</original>
    <variation>R</variation>
    <location>
        <position position="271"/>
    </location>
</feature>
<feature type="mutagenesis site" description="Does not affect ATG12 conjugation." evidence="5">
    <original>K</original>
    <variation>R</variation>
    <location>
        <position position="295"/>
    </location>
</feature>
<comment type="function">
    <text evidence="1 4 5 6 7 8 9">E2 conjugating enzyme that catalyzes the covalent conjugation of the C-terminal Gly of ATG8-like proteins (GABARAP, GABARAPL1, GABARAPL2 or MAP1LC3A) to the amino group of phosphatidylethanolamine (PE)-containing lipids in the membrane resulting in membrane-bound ATG8-like proteins which is one of the key steps in the development of autophagic isolation membranes during autophagosome formation (PubMed:18768753). Cycles back and forth between binding to ATG7 for loading with the ATG8-like proteins and binding to E3 enzyme, composed of ATG12, ATG5 and ATG16L1 to promote ATG8-like proteins lipidation (By similarity). Also play a role as a membrane curvature sensor that facilitates LC3/GABARAP lipidation by sensing local membrane stress associated with lipid-packing defects as occurs with high molar proportions of conical lipids or strident membrane curvature (PubMed:24747438). Interacts with negatively-charged membranes promoting membrane tethering and enhancing LC3/GABARAP lipidation (By similarity). Also acts as an autocatalytic E2-like enzyme by catalyzing the conjugation of ATG12 to itself in an ATG7-dependent manner, this complex thus formed, plays a role in mitochondrial homeostasis but not in autophagy (PubMed:20723759). ATG12-ATG3 conjugation promotes late endosome to lysosome trafficking and basal autophagosome maturation via its interaction with PDCD6IP (PubMed:25686249). ATG12-ATG3 conjugate is also formed upon viccina virus infection, leading to the disruption the cellular autophagy which is not necessary for vaccinia survival and proliferation (PubMed:22024753). Promotes primary ciliogenesis by removing OFD1 from centriolar satellites via the autophagic pathway (PubMed:24089205).</text>
</comment>
<comment type="subunit">
    <text evidence="1 3 5 9">Homdimer. Interacts with ATG7; this interaction forms an E1-E2 complex that is essential for the transfer of GABARAP thioester from ATG7 to ATG3 and disrupts interaction with the E3 enzyme complex (By similarity). Interacts with ATG12; this interaction is ATG7-dependent (PubMed:20723759), essential for phosphatidylethanolamine (PE)-conjugated ATG8-like proteins formation (PubMed:18321988) and also mediates the autoconjugation of ATG12 on ATG3 (PubMed:18321988, PubMed:20723759). Interacts with FNBP1L. Interacts with the E3 enzyme complex composed of 4 sets of ATG12-ATG5 and ATG16L1 (400 kDa); this interaction disrupts interaction with ATG7 and promotes ATG8-like proteins lipidation. Interacts with GABARAP and MAP1LC3A. Interacts with the ATG12-ATG5 conjugate; this interaction inhibits ATG8-like proteins lipidation (By similarity). Interacts (ATG12-ATG3 conjugate form) with PDCD6IP (via the BRO1 domain); this interaction is bridged by ATG12 and promotes multiple PDCD6IP-mediated functions such as endolysosomal trafficking, macroautophagy and exosome biogenesis (PubMed:25686249).</text>
</comment>
<comment type="interaction">
    <interactant intactId="EBI-2911810">
        <id>Q9CPX6</id>
    </interactant>
    <interactant intactId="EBI-2911788">
        <id>Q9CQY1</id>
        <label>Atg12</label>
    </interactant>
    <organismsDiffer>false</organismsDiffer>
    <experiments>5</experiments>
</comment>
<comment type="subcellular location">
    <subcellularLocation>
        <location evidence="1">Cytoplasm</location>
    </subcellularLocation>
</comment>
<comment type="induction">
    <text evidence="10">ATG3 protein translation is increased by EIF5A.</text>
</comment>
<comment type="domain">
    <text evidence="8">The membrane-curvature-sensing motif targets curved membranes.</text>
</comment>
<comment type="domain">
    <text evidence="1">The N-terminal region works in concert with its geometry-selective amphipathic helix (AH) to promote LC3-PE conjugation activity only on the target membrane.</text>
</comment>
<comment type="domain">
    <text evidence="1">The LC3 interacting regions (LIR) motif mediates interaction with GABARAP and MAP1LC3A in a beta-sheet conformation-dependent manner. The LIR motif is required for LC3 lipidation and ATG3~LC3 thioester formation.</text>
</comment>
<comment type="PTM">
    <text evidence="5">Conjugated to ATG12 at Lys-243 (PubMed:20723759). ATG12-conjugation plays a role in regulation of mitochondrial homeostasis and cell death, while it is not involved in PE-conjugation to ATG8-like proteins and autophagy (PubMed:20723759).</text>
</comment>
<comment type="PTM">
    <text evidence="1">Cleaved by CASP8 upon death ligand binding such as tumor necrosis factor-alpha. CASP8 cleavage blocks survival-related autophagy and favors apoptosis.</text>
</comment>
<comment type="disruption phenotype">
    <text evidence="4">Homozygous mice lacking the Atg3 gene are at Mendelian frequency, their body weightis lower than expected and they die within 1 d after birth.</text>
</comment>
<comment type="similarity">
    <text evidence="11">Belongs to the ATG3 family.</text>
</comment>
<gene>
    <name evidence="12" type="primary">Atg3</name>
    <name type="synonym">Apg3l</name>
</gene>
<name>ATG3_MOUSE</name>
<proteinExistence type="evidence at protein level"/>
<evidence type="ECO:0000250" key="1">
    <source>
        <dbReference type="UniProtKB" id="Q9NT62"/>
    </source>
</evidence>
<evidence type="ECO:0000256" key="2">
    <source>
        <dbReference type="SAM" id="MobiDB-lite"/>
    </source>
</evidence>
<evidence type="ECO:0000269" key="3">
    <source>
    </source>
</evidence>
<evidence type="ECO:0000269" key="4">
    <source>
    </source>
</evidence>
<evidence type="ECO:0000269" key="5">
    <source>
    </source>
</evidence>
<evidence type="ECO:0000269" key="6">
    <source>
    </source>
</evidence>
<evidence type="ECO:0000269" key="7">
    <source>
    </source>
</evidence>
<evidence type="ECO:0000269" key="8">
    <source>
    </source>
</evidence>
<evidence type="ECO:0000269" key="9">
    <source>
    </source>
</evidence>
<evidence type="ECO:0000269" key="10">
    <source>
    </source>
</evidence>
<evidence type="ECO:0000305" key="11"/>
<evidence type="ECO:0000312" key="12">
    <source>
        <dbReference type="MGI" id="MGI:1915091"/>
    </source>
</evidence>